<dbReference type="EMBL" id="X12554">
    <property type="protein sequence ID" value="CAA31068.1"/>
    <property type="status" value="ALT_INIT"/>
    <property type="molecule type" value="mRNA"/>
</dbReference>
<dbReference type="PIR" id="S01157">
    <property type="entry name" value="S01157"/>
</dbReference>
<dbReference type="SMR" id="P10817"/>
<dbReference type="FunCoup" id="P10817">
    <property type="interactions" value="187"/>
</dbReference>
<dbReference type="STRING" id="10116.ENSRNOP00000026908"/>
<dbReference type="CarbonylDB" id="P10817"/>
<dbReference type="PhosphoSitePlus" id="P10817"/>
<dbReference type="PaxDb" id="10116-ENSRNOP00000026908"/>
<dbReference type="UCSC" id="RGD:2385">
    <property type="organism name" value="rat"/>
</dbReference>
<dbReference type="AGR" id="RGD:2385"/>
<dbReference type="RGD" id="2385">
    <property type="gene designation" value="Cox6a2"/>
</dbReference>
<dbReference type="eggNOG" id="KOG3469">
    <property type="taxonomic scope" value="Eukaryota"/>
</dbReference>
<dbReference type="InParanoid" id="P10817"/>
<dbReference type="PhylomeDB" id="P10817"/>
<dbReference type="Reactome" id="R-RNO-5628897">
    <property type="pathway name" value="TP53 Regulates Metabolic Genes"/>
</dbReference>
<dbReference type="Reactome" id="R-RNO-611105">
    <property type="pathway name" value="Respiratory electron transport"/>
</dbReference>
<dbReference type="Reactome" id="R-RNO-9707564">
    <property type="pathway name" value="Cytoprotection by HMOX1"/>
</dbReference>
<dbReference type="UniPathway" id="UPA00705"/>
<dbReference type="Proteomes" id="UP000002494">
    <property type="component" value="Unplaced"/>
</dbReference>
<dbReference type="GO" id="GO:0005743">
    <property type="term" value="C:mitochondrial inner membrane"/>
    <property type="evidence" value="ECO:0000266"/>
    <property type="project" value="RGD"/>
</dbReference>
<dbReference type="GO" id="GO:0045277">
    <property type="term" value="C:respiratory chain complex IV"/>
    <property type="evidence" value="ECO:0000266"/>
    <property type="project" value="RGD"/>
</dbReference>
<dbReference type="GO" id="GO:0004129">
    <property type="term" value="F:cytochrome-c oxidase activity"/>
    <property type="evidence" value="ECO:0000304"/>
    <property type="project" value="RGD"/>
</dbReference>
<dbReference type="GO" id="GO:0030234">
    <property type="term" value="F:enzyme regulator activity"/>
    <property type="evidence" value="ECO:0000318"/>
    <property type="project" value="GO_Central"/>
</dbReference>
<dbReference type="GO" id="GO:0006123">
    <property type="term" value="P:mitochondrial electron transport, cytochrome c to oxygen"/>
    <property type="evidence" value="ECO:0000318"/>
    <property type="project" value="GO_Central"/>
</dbReference>
<dbReference type="CDD" id="cd00925">
    <property type="entry name" value="Cyt_c_Oxidase_VIa"/>
    <property type="match status" value="1"/>
</dbReference>
<dbReference type="FunFam" id="4.10.95.10:FF:000001">
    <property type="entry name" value="Cytochrome c oxidase subunit 6A, mitochondrial"/>
    <property type="match status" value="1"/>
</dbReference>
<dbReference type="Gene3D" id="4.10.95.10">
    <property type="entry name" value="Cytochrome c oxidase, subunit VIa"/>
    <property type="match status" value="1"/>
</dbReference>
<dbReference type="InterPro" id="IPR001349">
    <property type="entry name" value="Cyt_c_oxidase_su6a"/>
</dbReference>
<dbReference type="InterPro" id="IPR018507">
    <property type="entry name" value="Cyt_c_oxidase_su6a_CS"/>
</dbReference>
<dbReference type="InterPro" id="IPR036418">
    <property type="entry name" value="Cyt_c_oxidase_su6a_sf"/>
</dbReference>
<dbReference type="PANTHER" id="PTHR11504">
    <property type="entry name" value="CYTOCHROME C OXIDASE POLYPEPTIDE VIA"/>
    <property type="match status" value="1"/>
</dbReference>
<dbReference type="PANTHER" id="PTHR11504:SF1">
    <property type="entry name" value="CYTOCHROME C OXIDASE SUBUNIT 6A2, MITOCHONDRIAL"/>
    <property type="match status" value="1"/>
</dbReference>
<dbReference type="Pfam" id="PF02046">
    <property type="entry name" value="COX6A"/>
    <property type="match status" value="1"/>
</dbReference>
<dbReference type="PIRSF" id="PIRSF000277">
    <property type="entry name" value="COX6A1"/>
    <property type="match status" value="1"/>
</dbReference>
<dbReference type="SUPFAM" id="SSF81411">
    <property type="entry name" value="Mitochondrial cytochrome c oxidase subunit VIa"/>
    <property type="match status" value="1"/>
</dbReference>
<dbReference type="PROSITE" id="PS01329">
    <property type="entry name" value="COX6A"/>
    <property type="match status" value="1"/>
</dbReference>
<accession>P10817</accession>
<evidence type="ECO:0000250" key="1">
    <source>
        <dbReference type="UniProtKB" id="P07471"/>
    </source>
</evidence>
<evidence type="ECO:0000250" key="2">
    <source>
        <dbReference type="UniProtKB" id="P32799"/>
    </source>
</evidence>
<evidence type="ECO:0000250" key="3">
    <source>
        <dbReference type="UniProtKB" id="P43023"/>
    </source>
</evidence>
<evidence type="ECO:0000256" key="4">
    <source>
        <dbReference type="SAM" id="MobiDB-lite"/>
    </source>
</evidence>
<evidence type="ECO:0000269" key="5">
    <source>
    </source>
</evidence>
<evidence type="ECO:0000305" key="6"/>
<comment type="function">
    <text evidence="2 3">Component of the cytochrome c oxidase, the last enzyme in the mitochondrial electron transport chain which drives oxidative phosphorylation. The respiratory chain contains 3 multisubunit complexes succinate dehydrogenase (complex II, CII), ubiquinol-cytochrome c oxidoreductase (cytochrome b-c1 complex, complex III, CIII) and cytochrome c oxidase (complex IV, CIV), that cooperate to transfer electrons derived from NADH and succinate to molecular oxygen, creating an electrochemical gradient over the inner membrane that drives transmembrane transport and the ATP synthase. Cytochrome c oxidase is the component of the respiratory chain that catalyzes the reduction of oxygen to water. Electrons originating from reduced cytochrome c in the intermembrane space (IMS) are transferred via the dinuclear copper A center (CU(A)) of subunit 2 and heme A of subunit 1 to the active site in subunit 1, a binuclear center (BNC) formed by heme A3 and copper B (CU(B)). The BNC reduces molecular oxygen to 2 water molecules unsing 4 electrons from cytochrome c in the IMS and 4 protons from the mitochondrial matrix. Plays a role in the assembly and stabilization of complex IV (By similarity).</text>
</comment>
<comment type="pathway">
    <text evidence="2">Energy metabolism; oxidative phosphorylation.</text>
</comment>
<comment type="subunit">
    <text evidence="1">Component of the cytochrome c oxidase (complex IV, CIV), a multisubunit enzyme composed of 14 subunits. The complex is composed of a catalytic core of 3 subunits MT-CO1, MT-CO2 and MT-CO3, encoded in the mitochondrial DNA, and 11 supernumerary subunits COX4I, COX5A, COX5B, COX6A, COX6B, COX6C, COX7A, COX7B, COX7C, COX8 and NDUFA4, which are encoded in the nuclear genome. The complex exists as a monomer or a dimer and forms supercomplexes (SCs) in the inner mitochondrial membrane with NADH-ubiquinone oxidoreductase (complex I, CI) and ubiquinol-cytochrome c oxidoreductase (cytochrome b-c1 complex, complex III, CIII), resulting in different assemblies (supercomplex SCI(1)III(2)IV(1) and megacomplex MCI(2)III(2)IV(2)).</text>
</comment>
<comment type="subcellular location">
    <subcellularLocation>
        <location evidence="1">Mitochondrion inner membrane</location>
        <topology evidence="1">Single-pass membrane protein</topology>
    </subcellularLocation>
</comment>
<comment type="tissue specificity">
    <text>Heart/muscle specific isoform.</text>
</comment>
<comment type="similarity">
    <text evidence="6">Belongs to the cytochrome c oxidase subunit 6A family.</text>
</comment>
<comment type="sequence caution" evidence="6">
    <conflict type="erroneous initiation">
        <sequence resource="EMBL-CDS" id="CAA31068"/>
    </conflict>
</comment>
<sequence>PLKVLSRSMASASKGDHGGAGANTWRLLTFVLALPSVALCSLNCWMHAGHHERPEFIPYHHLRIRTKPFSWGDGNHTLFHNPHVNPLPTGYEQP</sequence>
<proteinExistence type="evidence at protein level"/>
<protein>
    <recommendedName>
        <fullName>Cytochrome c oxidase subunit 6A2, mitochondrial</fullName>
    </recommendedName>
    <alternativeName>
        <fullName>Cytochrome c oxidase polypeptide VIa-heart</fullName>
        <shortName>COXVIAH</shortName>
    </alternativeName>
</protein>
<organism>
    <name type="scientific">Rattus norvegicus</name>
    <name type="common">Rat</name>
    <dbReference type="NCBI Taxonomy" id="10116"/>
    <lineage>
        <taxon>Eukaryota</taxon>
        <taxon>Metazoa</taxon>
        <taxon>Chordata</taxon>
        <taxon>Craniata</taxon>
        <taxon>Vertebrata</taxon>
        <taxon>Euteleostomi</taxon>
        <taxon>Mammalia</taxon>
        <taxon>Eutheria</taxon>
        <taxon>Euarchontoglires</taxon>
        <taxon>Glires</taxon>
        <taxon>Rodentia</taxon>
        <taxon>Myomorpha</taxon>
        <taxon>Muroidea</taxon>
        <taxon>Muridae</taxon>
        <taxon>Murinae</taxon>
        <taxon>Rattus</taxon>
    </lineage>
</organism>
<keyword id="KW-0903">Direct protein sequencing</keyword>
<keyword id="KW-0472">Membrane</keyword>
<keyword id="KW-0496">Mitochondrion</keyword>
<keyword id="KW-0999">Mitochondrion inner membrane</keyword>
<keyword id="KW-0560">Oxidoreductase</keyword>
<keyword id="KW-1185">Reference proteome</keyword>
<keyword id="KW-0809">Transit peptide</keyword>
<keyword id="KW-0812">Transmembrane</keyword>
<keyword id="KW-1133">Transmembrane helix</keyword>
<gene>
    <name type="primary">Cox6a2</name>
</gene>
<reference key="1">
    <citation type="journal article" date="1988" name="EMBO J.">
        <title>Characterization of two different genes (cDNA) for cytochrome c oxidase subunit VIa from heart and liver of the rat.</title>
        <authorList>
            <person name="Schlerf A."/>
            <person name="Droste M."/>
            <person name="Winter M."/>
            <person name="Kadenbach B."/>
        </authorList>
    </citation>
    <scope>NUCLEOTIDE SEQUENCE [MRNA]</scope>
    <source>
        <tissue>Heart</tissue>
    </source>
</reference>
<reference key="2">
    <citation type="submission" date="1989-06" db="EMBL/GenBank/DDBJ databases">
        <authorList>
            <person name="Kadenbach B."/>
        </authorList>
    </citation>
    <scope>SEQUENCE REVISION</scope>
</reference>
<reference key="3">
    <citation type="journal article" date="1990" name="Biochim. Biophys. Acta">
        <title>Tissue- and species-specific expression of cytochrome c oxidase isozymes in vertebrates.</title>
        <authorList>
            <person name="Kadenbach B."/>
            <person name="Stroh A."/>
            <person name="Becker A."/>
            <person name="Eckersorn C."/>
            <person name="Lottspeich F."/>
        </authorList>
    </citation>
    <scope>PROTEIN SEQUENCE OF 10-19</scope>
    <source>
        <tissue>Heart</tissue>
    </source>
</reference>
<feature type="transit peptide" description="Mitochondrion" evidence="5">
    <location>
        <begin position="1" status="less than"/>
        <end position="9"/>
    </location>
</feature>
<feature type="chain" id="PRO_0000006118" description="Cytochrome c oxidase subunit 6A2, mitochondrial">
    <location>
        <begin position="10"/>
        <end position="94"/>
    </location>
</feature>
<feature type="topological domain" description="Mitochondrial matrix" evidence="1">
    <location>
        <begin position="10"/>
        <end position="21"/>
    </location>
</feature>
<feature type="transmembrane region" description="Helical" evidence="1">
    <location>
        <begin position="22"/>
        <end position="46"/>
    </location>
</feature>
<feature type="topological domain" description="Mitochondrial intermembrane" evidence="1">
    <location>
        <begin position="47"/>
        <end position="94"/>
    </location>
</feature>
<feature type="region of interest" description="Disordered" evidence="4">
    <location>
        <begin position="1"/>
        <end position="20"/>
    </location>
</feature>
<feature type="non-terminal residue">
    <location>
        <position position="1"/>
    </location>
</feature>
<name>CX6A2_RAT</name>